<proteinExistence type="evidence at protein level"/>
<sequence length="9" mass="919">GLSLSFAPK</sequence>
<keyword id="KW-0903">Direct protein sequencing</keyword>
<reference key="1">
    <citation type="journal article" date="2009" name="Physiol. Plantarum">
        <title>The presence of sinapyl lignin in Ginkgo biloba cell cultures changes our views of the evolution of lignin biosynthesis.</title>
        <authorList>
            <person name="Novo Uzal E."/>
            <person name="Gomez Ros L.V."/>
            <person name="Pomar F."/>
            <person name="Bernal M.A."/>
            <person name="Paradela A."/>
            <person name="Albar J.P."/>
            <person name="Ros Barcelo A."/>
        </authorList>
    </citation>
    <scope>PROTEIN SEQUENCE</scope>
    <source>
        <strain>PC-650</strain>
        <tissue>Callus</tissue>
    </source>
</reference>
<feature type="chain" id="PRO_0000318123" description="Unknown protein 1">
    <location>
        <begin position="1" status="less than"/>
        <end position="9" status="greater than"/>
    </location>
</feature>
<feature type="unsure residue" description="L or I">
    <location>
        <position position="2"/>
    </location>
</feature>
<feature type="unsure residue" description="L or I">
    <location>
        <position position="4"/>
    </location>
</feature>
<feature type="unsure residue" description="F or M">
    <location>
        <position position="6"/>
    </location>
</feature>
<feature type="non-terminal residue">
    <location>
        <position position="1"/>
    </location>
</feature>
<feature type="non-terminal residue">
    <location>
        <position position="9"/>
    </location>
</feature>
<name>UP01_GINBI</name>
<organism>
    <name type="scientific">Ginkgo biloba</name>
    <name type="common">Ginkgo</name>
    <name type="synonym">Maidenhair tree</name>
    <dbReference type="NCBI Taxonomy" id="3311"/>
    <lineage>
        <taxon>Eukaryota</taxon>
        <taxon>Viridiplantae</taxon>
        <taxon>Streptophyta</taxon>
        <taxon>Embryophyta</taxon>
        <taxon>Tracheophyta</taxon>
        <taxon>Spermatophyta</taxon>
        <taxon>Ginkgoidae</taxon>
        <taxon>Ginkgoales</taxon>
        <taxon>Ginkgoaceae</taxon>
        <taxon>Ginkgo</taxon>
    </lineage>
</organism>
<protein>
    <recommendedName>
        <fullName>Unknown protein 1</fullName>
    </recommendedName>
</protein>
<accession>P85423</accession>